<sequence>MKKVVKYLISLILAIIIVLFVQTFVIVGHVIPNNDMSPTLNKGDRVIVNKIKVTFNQLNNGDIITYRRGNEIYTSRIIAKPGQSMAFRQGQLYRDDRPVDASYAKNRKIKDFSLRNFKELDGDIIPPNNFVVLNDHDNNQHDSRQFGLIDKKDIIGNISLRYYPFSKWTIQFKS</sequence>
<protein>
    <recommendedName>
        <fullName>Inactive signal peptidase IA</fullName>
    </recommendedName>
</protein>
<reference key="1">
    <citation type="journal article" date="2001" name="Lancet">
        <title>Whole genome sequencing of meticillin-resistant Staphylococcus aureus.</title>
        <authorList>
            <person name="Kuroda M."/>
            <person name="Ohta T."/>
            <person name="Uchiyama I."/>
            <person name="Baba T."/>
            <person name="Yuzawa H."/>
            <person name="Kobayashi I."/>
            <person name="Cui L."/>
            <person name="Oguchi A."/>
            <person name="Aoki K."/>
            <person name="Nagai Y."/>
            <person name="Lian J.-Q."/>
            <person name="Ito T."/>
            <person name="Kanamori M."/>
            <person name="Matsumaru H."/>
            <person name="Maruyama A."/>
            <person name="Murakami H."/>
            <person name="Hosoyama A."/>
            <person name="Mizutani-Ui Y."/>
            <person name="Takahashi N.K."/>
            <person name="Sawano T."/>
            <person name="Inoue R."/>
            <person name="Kaito C."/>
            <person name="Sekimizu K."/>
            <person name="Hirakawa H."/>
            <person name="Kuhara S."/>
            <person name="Goto S."/>
            <person name="Yabuzaki J."/>
            <person name="Kanehisa M."/>
            <person name="Yamashita A."/>
            <person name="Oshima K."/>
            <person name="Furuya K."/>
            <person name="Yoshino C."/>
            <person name="Shiba T."/>
            <person name="Hattori M."/>
            <person name="Ogasawara N."/>
            <person name="Hayashi H."/>
            <person name="Hiramatsu K."/>
        </authorList>
    </citation>
    <scope>NUCLEOTIDE SEQUENCE [LARGE SCALE GENOMIC DNA]</scope>
    <source>
        <strain>Mu50 / ATCC 700699</strain>
    </source>
</reference>
<keyword id="KW-1003">Cell membrane</keyword>
<keyword id="KW-0472">Membrane</keyword>
<keyword id="KW-0812">Transmembrane</keyword>
<keyword id="KW-1133">Transmembrane helix</keyword>
<comment type="function">
    <text evidence="1">Catalytically inactive.</text>
</comment>
<comment type="subcellular location">
    <subcellularLocation>
        <location evidence="3">Cell membrane</location>
        <topology evidence="3">Single-pass type II membrane protein</topology>
    </subcellularLocation>
</comment>
<comment type="similarity">
    <text evidence="3">Belongs to the peptidase S26 family.</text>
</comment>
<evidence type="ECO:0000250" key="1"/>
<evidence type="ECO:0000255" key="2"/>
<evidence type="ECO:0000305" key="3"/>
<accession>P0A063</accession>
<accession>P72364</accession>
<name>LEPH_STAAM</name>
<feature type="chain" id="PRO_0000109520" description="Inactive signal peptidase IA">
    <location>
        <begin position="1"/>
        <end position="174"/>
    </location>
</feature>
<feature type="topological domain" description="Cytoplasmic" evidence="2">
    <location>
        <begin position="1"/>
        <end position="7"/>
    </location>
</feature>
<feature type="transmembrane region" description="Helical" evidence="2">
    <location>
        <begin position="8"/>
        <end position="28"/>
    </location>
</feature>
<feature type="topological domain" description="Extracellular" evidence="2">
    <location>
        <begin position="29"/>
        <end position="174"/>
    </location>
</feature>
<proteinExistence type="inferred from homology"/>
<dbReference type="EMBL" id="BA000017">
    <property type="protein sequence ID" value="BAB57126.1"/>
    <property type="molecule type" value="Genomic_DNA"/>
</dbReference>
<dbReference type="SMR" id="P0A063"/>
<dbReference type="DNASU" id="1120939"/>
<dbReference type="KEGG" id="sav:SAV0964"/>
<dbReference type="HOGENOM" id="CLU_028723_5_0_9"/>
<dbReference type="PhylomeDB" id="P0A063"/>
<dbReference type="Proteomes" id="UP000002481">
    <property type="component" value="Chromosome"/>
</dbReference>
<dbReference type="GO" id="GO:0005886">
    <property type="term" value="C:plasma membrane"/>
    <property type="evidence" value="ECO:0007669"/>
    <property type="project" value="UniProtKB-SubCell"/>
</dbReference>
<dbReference type="GO" id="GO:0004252">
    <property type="term" value="F:serine-type endopeptidase activity"/>
    <property type="evidence" value="ECO:0007669"/>
    <property type="project" value="InterPro"/>
</dbReference>
<dbReference type="GO" id="GO:0006465">
    <property type="term" value="P:signal peptide processing"/>
    <property type="evidence" value="ECO:0007669"/>
    <property type="project" value="InterPro"/>
</dbReference>
<dbReference type="CDD" id="cd06530">
    <property type="entry name" value="S26_SPase_I"/>
    <property type="match status" value="1"/>
</dbReference>
<dbReference type="Gene3D" id="2.10.109.10">
    <property type="entry name" value="Umud Fragment, subunit A"/>
    <property type="match status" value="1"/>
</dbReference>
<dbReference type="InterPro" id="IPR036286">
    <property type="entry name" value="LexA/Signal_pep-like_sf"/>
</dbReference>
<dbReference type="InterPro" id="IPR000223">
    <property type="entry name" value="Pept_S26A_signal_pept_1"/>
</dbReference>
<dbReference type="InterPro" id="IPR019533">
    <property type="entry name" value="Peptidase_S26"/>
</dbReference>
<dbReference type="NCBIfam" id="TIGR02227">
    <property type="entry name" value="sigpep_I_bact"/>
    <property type="match status" value="1"/>
</dbReference>
<dbReference type="PANTHER" id="PTHR43390:SF1">
    <property type="entry name" value="CHLOROPLAST PROCESSING PEPTIDASE"/>
    <property type="match status" value="1"/>
</dbReference>
<dbReference type="PANTHER" id="PTHR43390">
    <property type="entry name" value="SIGNAL PEPTIDASE I"/>
    <property type="match status" value="1"/>
</dbReference>
<dbReference type="Pfam" id="PF10502">
    <property type="entry name" value="Peptidase_S26"/>
    <property type="match status" value="1"/>
</dbReference>
<dbReference type="PRINTS" id="PR00727">
    <property type="entry name" value="LEADERPTASE"/>
</dbReference>
<dbReference type="SUPFAM" id="SSF51306">
    <property type="entry name" value="LexA/Signal peptidase"/>
    <property type="match status" value="1"/>
</dbReference>
<organism>
    <name type="scientific">Staphylococcus aureus (strain Mu50 / ATCC 700699)</name>
    <dbReference type="NCBI Taxonomy" id="158878"/>
    <lineage>
        <taxon>Bacteria</taxon>
        <taxon>Bacillati</taxon>
        <taxon>Bacillota</taxon>
        <taxon>Bacilli</taxon>
        <taxon>Bacillales</taxon>
        <taxon>Staphylococcaceae</taxon>
        <taxon>Staphylococcus</taxon>
    </lineage>
</organism>
<gene>
    <name type="primary">spsA</name>
    <name type="ordered locus">SAV0964</name>
</gene>